<gene>
    <name evidence="1" type="primary">rpmG</name>
    <name type="ordered locus">Arad_1886</name>
</gene>
<evidence type="ECO:0000255" key="1">
    <source>
        <dbReference type="HAMAP-Rule" id="MF_00294"/>
    </source>
</evidence>
<evidence type="ECO:0000305" key="2"/>
<organism>
    <name type="scientific">Rhizobium rhizogenes (strain K84 / ATCC BAA-868)</name>
    <name type="common">Agrobacterium radiobacter</name>
    <dbReference type="NCBI Taxonomy" id="311403"/>
    <lineage>
        <taxon>Bacteria</taxon>
        <taxon>Pseudomonadati</taxon>
        <taxon>Pseudomonadota</taxon>
        <taxon>Alphaproteobacteria</taxon>
        <taxon>Hyphomicrobiales</taxon>
        <taxon>Rhizobiaceae</taxon>
        <taxon>Rhizobium/Agrobacterium group</taxon>
        <taxon>Rhizobium</taxon>
    </lineage>
</organism>
<proteinExistence type="inferred from homology"/>
<reference key="1">
    <citation type="journal article" date="2009" name="J. Bacteriol.">
        <title>Genome sequences of three Agrobacterium biovars help elucidate the evolution of multichromosome genomes in bacteria.</title>
        <authorList>
            <person name="Slater S.C."/>
            <person name="Goldman B.S."/>
            <person name="Goodner B."/>
            <person name="Setubal J.C."/>
            <person name="Farrand S.K."/>
            <person name="Nester E.W."/>
            <person name="Burr T.J."/>
            <person name="Banta L."/>
            <person name="Dickerman A.W."/>
            <person name="Paulsen I."/>
            <person name="Otten L."/>
            <person name="Suen G."/>
            <person name="Welch R."/>
            <person name="Almeida N.F."/>
            <person name="Arnold F."/>
            <person name="Burton O.T."/>
            <person name="Du Z."/>
            <person name="Ewing A."/>
            <person name="Godsy E."/>
            <person name="Heisel S."/>
            <person name="Houmiel K.L."/>
            <person name="Jhaveri J."/>
            <person name="Lu J."/>
            <person name="Miller N.M."/>
            <person name="Norton S."/>
            <person name="Chen Q."/>
            <person name="Phoolcharoen W."/>
            <person name="Ohlin V."/>
            <person name="Ondrusek D."/>
            <person name="Pride N."/>
            <person name="Stricklin S.L."/>
            <person name="Sun J."/>
            <person name="Wheeler C."/>
            <person name="Wilson L."/>
            <person name="Zhu H."/>
            <person name="Wood D.W."/>
        </authorList>
    </citation>
    <scope>NUCLEOTIDE SEQUENCE [LARGE SCALE GENOMIC DNA]</scope>
    <source>
        <strain>K84 / ATCC BAA-868</strain>
    </source>
</reference>
<protein>
    <recommendedName>
        <fullName evidence="1">Large ribosomal subunit protein bL33</fullName>
    </recommendedName>
    <alternativeName>
        <fullName evidence="2">50S ribosomal protein L33</fullName>
    </alternativeName>
</protein>
<comment type="similarity">
    <text evidence="1">Belongs to the bacterial ribosomal protein bL33 family.</text>
</comment>
<feature type="chain" id="PRO_1000204898" description="Large ribosomal subunit protein bL33">
    <location>
        <begin position="1"/>
        <end position="55"/>
    </location>
</feature>
<keyword id="KW-0687">Ribonucleoprotein</keyword>
<keyword id="KW-0689">Ribosomal protein</keyword>
<name>RL33_RHIR8</name>
<accession>B9JDL2</accession>
<dbReference type="EMBL" id="CP000628">
    <property type="protein sequence ID" value="ACM26213.1"/>
    <property type="molecule type" value="Genomic_DNA"/>
</dbReference>
<dbReference type="RefSeq" id="WP_003547442.1">
    <property type="nucleotide sequence ID" value="NC_011985.1"/>
</dbReference>
<dbReference type="SMR" id="B9JDL2"/>
<dbReference type="STRING" id="311403.Arad_1886"/>
<dbReference type="GeneID" id="86848095"/>
<dbReference type="KEGG" id="ara:Arad_1886"/>
<dbReference type="eggNOG" id="COG0267">
    <property type="taxonomic scope" value="Bacteria"/>
</dbReference>
<dbReference type="HOGENOM" id="CLU_190949_1_1_5"/>
<dbReference type="Proteomes" id="UP000001600">
    <property type="component" value="Chromosome 1"/>
</dbReference>
<dbReference type="GO" id="GO:0022625">
    <property type="term" value="C:cytosolic large ribosomal subunit"/>
    <property type="evidence" value="ECO:0007669"/>
    <property type="project" value="TreeGrafter"/>
</dbReference>
<dbReference type="GO" id="GO:0003735">
    <property type="term" value="F:structural constituent of ribosome"/>
    <property type="evidence" value="ECO:0007669"/>
    <property type="project" value="InterPro"/>
</dbReference>
<dbReference type="GO" id="GO:0006412">
    <property type="term" value="P:translation"/>
    <property type="evidence" value="ECO:0007669"/>
    <property type="project" value="UniProtKB-UniRule"/>
</dbReference>
<dbReference type="Gene3D" id="2.20.28.120">
    <property type="entry name" value="Ribosomal protein L33"/>
    <property type="match status" value="1"/>
</dbReference>
<dbReference type="HAMAP" id="MF_00294">
    <property type="entry name" value="Ribosomal_bL33"/>
    <property type="match status" value="1"/>
</dbReference>
<dbReference type="InterPro" id="IPR001705">
    <property type="entry name" value="Ribosomal_bL33"/>
</dbReference>
<dbReference type="InterPro" id="IPR018264">
    <property type="entry name" value="Ribosomal_bL33_CS"/>
</dbReference>
<dbReference type="InterPro" id="IPR038584">
    <property type="entry name" value="Ribosomal_bL33_sf"/>
</dbReference>
<dbReference type="InterPro" id="IPR011332">
    <property type="entry name" value="Ribosomal_zn-bd"/>
</dbReference>
<dbReference type="NCBIfam" id="NF001860">
    <property type="entry name" value="PRK00595.1"/>
    <property type="match status" value="1"/>
</dbReference>
<dbReference type="NCBIfam" id="TIGR01023">
    <property type="entry name" value="rpmG_bact"/>
    <property type="match status" value="1"/>
</dbReference>
<dbReference type="PANTHER" id="PTHR15238">
    <property type="entry name" value="54S RIBOSOMAL PROTEIN L39, MITOCHONDRIAL"/>
    <property type="match status" value="1"/>
</dbReference>
<dbReference type="PANTHER" id="PTHR15238:SF1">
    <property type="entry name" value="LARGE RIBOSOMAL SUBUNIT PROTEIN BL33M"/>
    <property type="match status" value="1"/>
</dbReference>
<dbReference type="Pfam" id="PF00471">
    <property type="entry name" value="Ribosomal_L33"/>
    <property type="match status" value="1"/>
</dbReference>
<dbReference type="SUPFAM" id="SSF57829">
    <property type="entry name" value="Zn-binding ribosomal proteins"/>
    <property type="match status" value="1"/>
</dbReference>
<dbReference type="PROSITE" id="PS00582">
    <property type="entry name" value="RIBOSOMAL_L33"/>
    <property type="match status" value="1"/>
</dbReference>
<sequence>MAKATTIKIKLLSTADTGFFYVTTKNSRTMTDKMTKTKYDPVAKKHVEFKETKIK</sequence>